<organism>
    <name type="scientific">Escherichia coli (strain SE11)</name>
    <dbReference type="NCBI Taxonomy" id="409438"/>
    <lineage>
        <taxon>Bacteria</taxon>
        <taxon>Pseudomonadati</taxon>
        <taxon>Pseudomonadota</taxon>
        <taxon>Gammaproteobacteria</taxon>
        <taxon>Enterobacterales</taxon>
        <taxon>Enterobacteriaceae</taxon>
        <taxon>Escherichia</taxon>
    </lineage>
</organism>
<name>SYGA_ECOSE</name>
<dbReference type="EC" id="6.1.1.14" evidence="1"/>
<dbReference type="EMBL" id="AP009240">
    <property type="protein sequence ID" value="BAG79357.1"/>
    <property type="molecule type" value="Genomic_DNA"/>
</dbReference>
<dbReference type="RefSeq" id="WP_001168544.1">
    <property type="nucleotide sequence ID" value="NC_011415.1"/>
</dbReference>
<dbReference type="SMR" id="B6I3D0"/>
<dbReference type="GeneID" id="93778290"/>
<dbReference type="KEGG" id="ecy:ECSE_3833"/>
<dbReference type="HOGENOM" id="CLU_057066_1_0_6"/>
<dbReference type="Proteomes" id="UP000008199">
    <property type="component" value="Chromosome"/>
</dbReference>
<dbReference type="GO" id="GO:0005829">
    <property type="term" value="C:cytosol"/>
    <property type="evidence" value="ECO:0007669"/>
    <property type="project" value="TreeGrafter"/>
</dbReference>
<dbReference type="GO" id="GO:0005524">
    <property type="term" value="F:ATP binding"/>
    <property type="evidence" value="ECO:0007669"/>
    <property type="project" value="UniProtKB-UniRule"/>
</dbReference>
<dbReference type="GO" id="GO:0004820">
    <property type="term" value="F:glycine-tRNA ligase activity"/>
    <property type="evidence" value="ECO:0007669"/>
    <property type="project" value="UniProtKB-UniRule"/>
</dbReference>
<dbReference type="GO" id="GO:0006426">
    <property type="term" value="P:glycyl-tRNA aminoacylation"/>
    <property type="evidence" value="ECO:0007669"/>
    <property type="project" value="UniProtKB-UniRule"/>
</dbReference>
<dbReference type="CDD" id="cd00733">
    <property type="entry name" value="GlyRS_alpha_core"/>
    <property type="match status" value="1"/>
</dbReference>
<dbReference type="FunFam" id="1.20.58.180:FF:000001">
    <property type="entry name" value="Glycine--tRNA ligase alpha subunit"/>
    <property type="match status" value="1"/>
</dbReference>
<dbReference type="FunFam" id="3.30.930.10:FF:000006">
    <property type="entry name" value="Glycine--tRNA ligase alpha subunit"/>
    <property type="match status" value="1"/>
</dbReference>
<dbReference type="Gene3D" id="3.30.930.10">
    <property type="entry name" value="Bira Bifunctional Protein, Domain 2"/>
    <property type="match status" value="1"/>
</dbReference>
<dbReference type="Gene3D" id="1.20.58.180">
    <property type="entry name" value="Class II aaRS and biotin synthetases, domain 2"/>
    <property type="match status" value="1"/>
</dbReference>
<dbReference type="HAMAP" id="MF_00254">
    <property type="entry name" value="Gly_tRNA_synth_alpha"/>
    <property type="match status" value="1"/>
</dbReference>
<dbReference type="InterPro" id="IPR045864">
    <property type="entry name" value="aa-tRNA-synth_II/BPL/LPL"/>
</dbReference>
<dbReference type="InterPro" id="IPR006194">
    <property type="entry name" value="Gly-tRNA-synth_heterodimer"/>
</dbReference>
<dbReference type="InterPro" id="IPR002310">
    <property type="entry name" value="Gly-tRNA_ligase_asu"/>
</dbReference>
<dbReference type="NCBIfam" id="TIGR00388">
    <property type="entry name" value="glyQ"/>
    <property type="match status" value="1"/>
</dbReference>
<dbReference type="NCBIfam" id="NF006827">
    <property type="entry name" value="PRK09348.1"/>
    <property type="match status" value="1"/>
</dbReference>
<dbReference type="PANTHER" id="PTHR30075:SF2">
    <property type="entry name" value="GLYCINE--TRNA LIGASE, CHLOROPLASTIC_MITOCHONDRIAL 2"/>
    <property type="match status" value="1"/>
</dbReference>
<dbReference type="PANTHER" id="PTHR30075">
    <property type="entry name" value="GLYCYL-TRNA SYNTHETASE"/>
    <property type="match status" value="1"/>
</dbReference>
<dbReference type="Pfam" id="PF02091">
    <property type="entry name" value="tRNA-synt_2e"/>
    <property type="match status" value="1"/>
</dbReference>
<dbReference type="PRINTS" id="PR01044">
    <property type="entry name" value="TRNASYNTHGA"/>
</dbReference>
<dbReference type="SUPFAM" id="SSF55681">
    <property type="entry name" value="Class II aaRS and biotin synthetases"/>
    <property type="match status" value="1"/>
</dbReference>
<dbReference type="PROSITE" id="PS50861">
    <property type="entry name" value="AA_TRNA_LIGASE_II_GLYAB"/>
    <property type="match status" value="1"/>
</dbReference>
<evidence type="ECO:0000255" key="1">
    <source>
        <dbReference type="HAMAP-Rule" id="MF_00254"/>
    </source>
</evidence>
<proteinExistence type="inferred from homology"/>
<feature type="chain" id="PRO_1000101187" description="Glycine--tRNA ligase alpha subunit">
    <location>
        <begin position="1"/>
        <end position="303"/>
    </location>
</feature>
<gene>
    <name evidence="1" type="primary">glyQ</name>
    <name type="ordered locus">ECSE_3833</name>
</gene>
<keyword id="KW-0030">Aminoacyl-tRNA synthetase</keyword>
<keyword id="KW-0067">ATP-binding</keyword>
<keyword id="KW-0963">Cytoplasm</keyword>
<keyword id="KW-0436">Ligase</keyword>
<keyword id="KW-0547">Nucleotide-binding</keyword>
<keyword id="KW-0648">Protein biosynthesis</keyword>
<sequence length="303" mass="34716">MQKFDTRTFQGLILTLQDYWARQGCTIVQPLDMEVGAGTSHPMTCLRALGPEPMAAAYVQPSRRPTDGRYGENPNRLQHYYQFQVVIKPSPDNIQELYLGSLKELGMDPTIHDIRFVEDNWENPTLGAWGLGWEVWLNGMEVTQFTYFQQVGGLECKPVTGEITYGLERLAMYIQGVDSVYDLVWSDGPLGKTTYGDVFHQNEVEQSTYNFEYADVDFLFTCFEQYEKEAQQLLALENPLPLPAYERILKAAHSFNLLDARKAISVTERQRYILRIRTLTKAVAEAYYASREALGFPMCNKDK</sequence>
<accession>B6I3D0</accession>
<reference key="1">
    <citation type="journal article" date="2008" name="DNA Res.">
        <title>Complete genome sequence and comparative analysis of the wild-type commensal Escherichia coli strain SE11 isolated from a healthy adult.</title>
        <authorList>
            <person name="Oshima K."/>
            <person name="Toh H."/>
            <person name="Ogura Y."/>
            <person name="Sasamoto H."/>
            <person name="Morita H."/>
            <person name="Park S.-H."/>
            <person name="Ooka T."/>
            <person name="Iyoda S."/>
            <person name="Taylor T.D."/>
            <person name="Hayashi T."/>
            <person name="Itoh K."/>
            <person name="Hattori M."/>
        </authorList>
    </citation>
    <scope>NUCLEOTIDE SEQUENCE [LARGE SCALE GENOMIC DNA]</scope>
    <source>
        <strain>SE11</strain>
    </source>
</reference>
<protein>
    <recommendedName>
        <fullName evidence="1">Glycine--tRNA ligase alpha subunit</fullName>
        <ecNumber evidence="1">6.1.1.14</ecNumber>
    </recommendedName>
    <alternativeName>
        <fullName evidence="1">Glycyl-tRNA synthetase alpha subunit</fullName>
        <shortName evidence="1">GlyRS</shortName>
    </alternativeName>
</protein>
<comment type="catalytic activity">
    <reaction evidence="1">
        <text>tRNA(Gly) + glycine + ATP = glycyl-tRNA(Gly) + AMP + diphosphate</text>
        <dbReference type="Rhea" id="RHEA:16013"/>
        <dbReference type="Rhea" id="RHEA-COMP:9664"/>
        <dbReference type="Rhea" id="RHEA-COMP:9683"/>
        <dbReference type="ChEBI" id="CHEBI:30616"/>
        <dbReference type="ChEBI" id="CHEBI:33019"/>
        <dbReference type="ChEBI" id="CHEBI:57305"/>
        <dbReference type="ChEBI" id="CHEBI:78442"/>
        <dbReference type="ChEBI" id="CHEBI:78522"/>
        <dbReference type="ChEBI" id="CHEBI:456215"/>
        <dbReference type="EC" id="6.1.1.14"/>
    </reaction>
</comment>
<comment type="subunit">
    <text evidence="1">Tetramer of two alpha and two beta subunits.</text>
</comment>
<comment type="subcellular location">
    <subcellularLocation>
        <location evidence="1">Cytoplasm</location>
    </subcellularLocation>
</comment>
<comment type="similarity">
    <text evidence="1">Belongs to the class-II aminoacyl-tRNA synthetase family.</text>
</comment>